<feature type="chain" id="PRO_1000164595" description="Alanine racemase">
    <location>
        <begin position="1"/>
        <end position="365"/>
    </location>
</feature>
<feature type="active site" description="Proton acceptor; specific for D-alanine" evidence="1">
    <location>
        <position position="35"/>
    </location>
</feature>
<feature type="active site" description="Proton acceptor; specific for L-alanine" evidence="1">
    <location>
        <position position="256"/>
    </location>
</feature>
<feature type="binding site" evidence="1">
    <location>
        <position position="130"/>
    </location>
    <ligand>
        <name>substrate</name>
    </ligand>
</feature>
<feature type="binding site" evidence="1">
    <location>
        <position position="304"/>
    </location>
    <ligand>
        <name>substrate</name>
    </ligand>
</feature>
<feature type="modified residue" description="N6-(pyridoxal phosphate)lysine" evidence="1">
    <location>
        <position position="35"/>
    </location>
</feature>
<proteinExistence type="inferred from homology"/>
<reference key="1">
    <citation type="submission" date="2009-01" db="EMBL/GenBank/DDBJ databases">
        <title>Complete sequence of Diaphorobacter sp. TPSY.</title>
        <authorList>
            <consortium name="US DOE Joint Genome Institute"/>
            <person name="Lucas S."/>
            <person name="Copeland A."/>
            <person name="Lapidus A."/>
            <person name="Glavina del Rio T."/>
            <person name="Tice H."/>
            <person name="Bruce D."/>
            <person name="Goodwin L."/>
            <person name="Pitluck S."/>
            <person name="Chertkov O."/>
            <person name="Brettin T."/>
            <person name="Detter J.C."/>
            <person name="Han C."/>
            <person name="Larimer F."/>
            <person name="Land M."/>
            <person name="Hauser L."/>
            <person name="Kyrpides N."/>
            <person name="Mikhailova N."/>
            <person name="Coates J.D."/>
        </authorList>
    </citation>
    <scope>NUCLEOTIDE SEQUENCE [LARGE SCALE GENOMIC DNA]</scope>
    <source>
        <strain>TPSY</strain>
    </source>
</reference>
<sequence>MPRPILATIHPAAVHHNLERARRAAPDARVWAVVKANAYGHGIERVFEGLRAADGFALLDLAEAERVRALGWRGPILLLEGVFEPRDLELCSRLGLWHAVHCDAQIDWLAAHKTQVPHRVFLKMNSGMNRLGFTPERYRSAWARLNALPQVDEISCMTHFSDADGPRGIAHQVQAFQTATRDLPGERCIANSAALLRHGGDAQVRLDWVRAGIVLYGSAPDHPERRAADWDLQPTMTLASRIIGVQQLQAGDTVGYGSRFTAQGPLGIGVVACGYADGYPRHCDTGTPVLVNGVRTRTIGRVSMDMLAVDLTPVPGAGLGAEVTLWGRAANGAVLPIDEVAQAGGTIGYELMCALAPRVPVVVQD</sequence>
<dbReference type="EC" id="5.1.1.1" evidence="1"/>
<dbReference type="EMBL" id="CP001392">
    <property type="protein sequence ID" value="ACM31679.1"/>
    <property type="molecule type" value="Genomic_DNA"/>
</dbReference>
<dbReference type="RefSeq" id="WP_012655296.1">
    <property type="nucleotide sequence ID" value="NC_011992.1"/>
</dbReference>
<dbReference type="SMR" id="B9MAN2"/>
<dbReference type="KEGG" id="dia:Dtpsy_0194"/>
<dbReference type="eggNOG" id="COG0787">
    <property type="taxonomic scope" value="Bacteria"/>
</dbReference>
<dbReference type="HOGENOM" id="CLU_028393_1_0_4"/>
<dbReference type="UniPathway" id="UPA00042">
    <property type="reaction ID" value="UER00497"/>
</dbReference>
<dbReference type="Proteomes" id="UP000000450">
    <property type="component" value="Chromosome"/>
</dbReference>
<dbReference type="GO" id="GO:0005829">
    <property type="term" value="C:cytosol"/>
    <property type="evidence" value="ECO:0007669"/>
    <property type="project" value="TreeGrafter"/>
</dbReference>
<dbReference type="GO" id="GO:0008784">
    <property type="term" value="F:alanine racemase activity"/>
    <property type="evidence" value="ECO:0007669"/>
    <property type="project" value="UniProtKB-UniRule"/>
</dbReference>
<dbReference type="GO" id="GO:0030170">
    <property type="term" value="F:pyridoxal phosphate binding"/>
    <property type="evidence" value="ECO:0007669"/>
    <property type="project" value="UniProtKB-UniRule"/>
</dbReference>
<dbReference type="GO" id="GO:0030632">
    <property type="term" value="P:D-alanine biosynthetic process"/>
    <property type="evidence" value="ECO:0007669"/>
    <property type="project" value="UniProtKB-UniRule"/>
</dbReference>
<dbReference type="CDD" id="cd06827">
    <property type="entry name" value="PLPDE_III_AR_proteobact"/>
    <property type="match status" value="1"/>
</dbReference>
<dbReference type="FunFam" id="3.20.20.10:FF:000002">
    <property type="entry name" value="Alanine racemase"/>
    <property type="match status" value="1"/>
</dbReference>
<dbReference type="Gene3D" id="3.20.20.10">
    <property type="entry name" value="Alanine racemase"/>
    <property type="match status" value="1"/>
</dbReference>
<dbReference type="Gene3D" id="2.40.37.10">
    <property type="entry name" value="Lyase, Ornithine Decarboxylase, Chain A, domain 1"/>
    <property type="match status" value="1"/>
</dbReference>
<dbReference type="HAMAP" id="MF_01201">
    <property type="entry name" value="Ala_racemase"/>
    <property type="match status" value="1"/>
</dbReference>
<dbReference type="InterPro" id="IPR000821">
    <property type="entry name" value="Ala_racemase"/>
</dbReference>
<dbReference type="InterPro" id="IPR009006">
    <property type="entry name" value="Ala_racemase/Decarboxylase_C"/>
</dbReference>
<dbReference type="InterPro" id="IPR011079">
    <property type="entry name" value="Ala_racemase_C"/>
</dbReference>
<dbReference type="InterPro" id="IPR001608">
    <property type="entry name" value="Ala_racemase_N"/>
</dbReference>
<dbReference type="InterPro" id="IPR020622">
    <property type="entry name" value="Ala_racemase_pyridoxalP-BS"/>
</dbReference>
<dbReference type="InterPro" id="IPR029066">
    <property type="entry name" value="PLP-binding_barrel"/>
</dbReference>
<dbReference type="NCBIfam" id="TIGR00492">
    <property type="entry name" value="alr"/>
    <property type="match status" value="1"/>
</dbReference>
<dbReference type="PANTHER" id="PTHR30511">
    <property type="entry name" value="ALANINE RACEMASE"/>
    <property type="match status" value="1"/>
</dbReference>
<dbReference type="PANTHER" id="PTHR30511:SF0">
    <property type="entry name" value="ALANINE RACEMASE, CATABOLIC-RELATED"/>
    <property type="match status" value="1"/>
</dbReference>
<dbReference type="Pfam" id="PF00842">
    <property type="entry name" value="Ala_racemase_C"/>
    <property type="match status" value="1"/>
</dbReference>
<dbReference type="Pfam" id="PF01168">
    <property type="entry name" value="Ala_racemase_N"/>
    <property type="match status" value="1"/>
</dbReference>
<dbReference type="PRINTS" id="PR00992">
    <property type="entry name" value="ALARACEMASE"/>
</dbReference>
<dbReference type="SMART" id="SM01005">
    <property type="entry name" value="Ala_racemase_C"/>
    <property type="match status" value="1"/>
</dbReference>
<dbReference type="SUPFAM" id="SSF50621">
    <property type="entry name" value="Alanine racemase C-terminal domain-like"/>
    <property type="match status" value="1"/>
</dbReference>
<dbReference type="SUPFAM" id="SSF51419">
    <property type="entry name" value="PLP-binding barrel"/>
    <property type="match status" value="1"/>
</dbReference>
<dbReference type="PROSITE" id="PS00395">
    <property type="entry name" value="ALANINE_RACEMASE"/>
    <property type="match status" value="1"/>
</dbReference>
<protein>
    <recommendedName>
        <fullName evidence="1">Alanine racemase</fullName>
        <ecNumber evidence="1">5.1.1.1</ecNumber>
    </recommendedName>
</protein>
<gene>
    <name type="primary">alr</name>
    <name type="ordered locus">Dtpsy_0194</name>
</gene>
<name>ALR_ACIET</name>
<keyword id="KW-0413">Isomerase</keyword>
<keyword id="KW-0663">Pyridoxal phosphate</keyword>
<keyword id="KW-1185">Reference proteome</keyword>
<evidence type="ECO:0000255" key="1">
    <source>
        <dbReference type="HAMAP-Rule" id="MF_01201"/>
    </source>
</evidence>
<organism>
    <name type="scientific">Acidovorax ebreus (strain TPSY)</name>
    <name type="common">Diaphorobacter sp. (strain TPSY)</name>
    <dbReference type="NCBI Taxonomy" id="535289"/>
    <lineage>
        <taxon>Bacteria</taxon>
        <taxon>Pseudomonadati</taxon>
        <taxon>Pseudomonadota</taxon>
        <taxon>Betaproteobacteria</taxon>
        <taxon>Burkholderiales</taxon>
        <taxon>Comamonadaceae</taxon>
        <taxon>Diaphorobacter</taxon>
    </lineage>
</organism>
<accession>B9MAN2</accession>
<comment type="function">
    <text evidence="1">Catalyzes the interconversion of L-alanine and D-alanine. May also act on other amino acids.</text>
</comment>
<comment type="catalytic activity">
    <reaction evidence="1">
        <text>L-alanine = D-alanine</text>
        <dbReference type="Rhea" id="RHEA:20249"/>
        <dbReference type="ChEBI" id="CHEBI:57416"/>
        <dbReference type="ChEBI" id="CHEBI:57972"/>
        <dbReference type="EC" id="5.1.1.1"/>
    </reaction>
</comment>
<comment type="cofactor">
    <cofactor evidence="1">
        <name>pyridoxal 5'-phosphate</name>
        <dbReference type="ChEBI" id="CHEBI:597326"/>
    </cofactor>
</comment>
<comment type="pathway">
    <text evidence="1">Amino-acid biosynthesis; D-alanine biosynthesis; D-alanine from L-alanine: step 1/1.</text>
</comment>
<comment type="similarity">
    <text evidence="1">Belongs to the alanine racemase family.</text>
</comment>